<name>HBAA_SERQU</name>
<proteinExistence type="evidence at transcript level"/>
<keyword id="KW-0349">Heme</keyword>
<keyword id="KW-0408">Iron</keyword>
<keyword id="KW-0479">Metal-binding</keyword>
<keyword id="KW-0561">Oxygen transport</keyword>
<keyword id="KW-0813">Transport</keyword>
<sequence>MSLSGKDKSVVKAFWDKMSPKSAEIGAEALGRMLTVYPQTKTYFSHWADVGPDSAQVKKHGATIMAAVGDAVGKIDDLVGGLSALSELHAFKLRVDPANFRILAHNIILVTAMYFPTDFTPEIHVSVDKFLQNLALALAERYR</sequence>
<accession>Q9PVM4</accession>
<dbReference type="EMBL" id="AB034639">
    <property type="protein sequence ID" value="BAA86218.1"/>
    <property type="molecule type" value="mRNA"/>
</dbReference>
<dbReference type="SMR" id="Q9PVM4"/>
<dbReference type="GO" id="GO:0072562">
    <property type="term" value="C:blood microparticle"/>
    <property type="evidence" value="ECO:0007669"/>
    <property type="project" value="TreeGrafter"/>
</dbReference>
<dbReference type="GO" id="GO:0031838">
    <property type="term" value="C:haptoglobin-hemoglobin complex"/>
    <property type="evidence" value="ECO:0007669"/>
    <property type="project" value="TreeGrafter"/>
</dbReference>
<dbReference type="GO" id="GO:0005833">
    <property type="term" value="C:hemoglobin complex"/>
    <property type="evidence" value="ECO:0007669"/>
    <property type="project" value="InterPro"/>
</dbReference>
<dbReference type="GO" id="GO:0031720">
    <property type="term" value="F:haptoglobin binding"/>
    <property type="evidence" value="ECO:0007669"/>
    <property type="project" value="TreeGrafter"/>
</dbReference>
<dbReference type="GO" id="GO:0020037">
    <property type="term" value="F:heme binding"/>
    <property type="evidence" value="ECO:0007669"/>
    <property type="project" value="InterPro"/>
</dbReference>
<dbReference type="GO" id="GO:0046872">
    <property type="term" value="F:metal ion binding"/>
    <property type="evidence" value="ECO:0007669"/>
    <property type="project" value="UniProtKB-KW"/>
</dbReference>
<dbReference type="GO" id="GO:0043177">
    <property type="term" value="F:organic acid binding"/>
    <property type="evidence" value="ECO:0007669"/>
    <property type="project" value="TreeGrafter"/>
</dbReference>
<dbReference type="GO" id="GO:0019825">
    <property type="term" value="F:oxygen binding"/>
    <property type="evidence" value="ECO:0007669"/>
    <property type="project" value="InterPro"/>
</dbReference>
<dbReference type="GO" id="GO:0005344">
    <property type="term" value="F:oxygen carrier activity"/>
    <property type="evidence" value="ECO:0007669"/>
    <property type="project" value="UniProtKB-KW"/>
</dbReference>
<dbReference type="GO" id="GO:0004601">
    <property type="term" value="F:peroxidase activity"/>
    <property type="evidence" value="ECO:0007669"/>
    <property type="project" value="TreeGrafter"/>
</dbReference>
<dbReference type="GO" id="GO:0042744">
    <property type="term" value="P:hydrogen peroxide catabolic process"/>
    <property type="evidence" value="ECO:0007669"/>
    <property type="project" value="TreeGrafter"/>
</dbReference>
<dbReference type="CDD" id="cd08927">
    <property type="entry name" value="Hb-alpha-like"/>
    <property type="match status" value="1"/>
</dbReference>
<dbReference type="FunFam" id="1.10.490.10:FF:000002">
    <property type="entry name" value="Hemoglobin subunit alpha"/>
    <property type="match status" value="1"/>
</dbReference>
<dbReference type="Gene3D" id="1.10.490.10">
    <property type="entry name" value="Globins"/>
    <property type="match status" value="1"/>
</dbReference>
<dbReference type="InterPro" id="IPR000971">
    <property type="entry name" value="Globin"/>
</dbReference>
<dbReference type="InterPro" id="IPR009050">
    <property type="entry name" value="Globin-like_sf"/>
</dbReference>
<dbReference type="InterPro" id="IPR012292">
    <property type="entry name" value="Globin/Proto"/>
</dbReference>
<dbReference type="InterPro" id="IPR002338">
    <property type="entry name" value="Hemoglobin_a-typ"/>
</dbReference>
<dbReference type="InterPro" id="IPR050056">
    <property type="entry name" value="Hemoglobin_oxygen_transport"/>
</dbReference>
<dbReference type="PANTHER" id="PTHR11442:SF93">
    <property type="entry name" value="ALPHA GLOBIN-LIKE-RELATED"/>
    <property type="match status" value="1"/>
</dbReference>
<dbReference type="PANTHER" id="PTHR11442">
    <property type="entry name" value="HEMOGLOBIN FAMILY MEMBER"/>
    <property type="match status" value="1"/>
</dbReference>
<dbReference type="Pfam" id="PF00042">
    <property type="entry name" value="Globin"/>
    <property type="match status" value="1"/>
</dbReference>
<dbReference type="PRINTS" id="PR00612">
    <property type="entry name" value="ALPHAHAEM"/>
</dbReference>
<dbReference type="SUPFAM" id="SSF46458">
    <property type="entry name" value="Globin-like"/>
    <property type="match status" value="1"/>
</dbReference>
<dbReference type="PROSITE" id="PS01033">
    <property type="entry name" value="GLOBIN"/>
    <property type="match status" value="1"/>
</dbReference>
<feature type="initiator methionine" description="Removed" evidence="1">
    <location>
        <position position="1"/>
    </location>
</feature>
<feature type="chain" id="PRO_0000052761" description="Hemoglobin subunit alpha-A">
    <location>
        <begin position="2"/>
        <end position="143"/>
    </location>
</feature>
<feature type="domain" description="Globin" evidence="2">
    <location>
        <begin position="2"/>
        <end position="143"/>
    </location>
</feature>
<feature type="binding site" evidence="2">
    <location>
        <position position="60"/>
    </location>
    <ligand>
        <name>O2</name>
        <dbReference type="ChEBI" id="CHEBI:15379"/>
    </ligand>
</feature>
<feature type="binding site" description="proximal binding residue" evidence="2">
    <location>
        <position position="89"/>
    </location>
    <ligand>
        <name>heme b</name>
        <dbReference type="ChEBI" id="CHEBI:60344"/>
    </ligand>
    <ligandPart>
        <name>Fe</name>
        <dbReference type="ChEBI" id="CHEBI:18248"/>
    </ligandPart>
</feature>
<evidence type="ECO:0000250" key="1"/>
<evidence type="ECO:0000255" key="2">
    <source>
        <dbReference type="PROSITE-ProRule" id="PRU00238"/>
    </source>
</evidence>
<comment type="function">
    <text>Involved in oxygen transport from gills to the various peripheral tissues.</text>
</comment>
<comment type="subunit">
    <text>Heterotetramer of two alpha chains and two beta chains.</text>
</comment>
<comment type="tissue specificity">
    <text>Red blood cells.</text>
</comment>
<comment type="similarity">
    <text evidence="2">Belongs to the globin family.</text>
</comment>
<protein>
    <recommendedName>
        <fullName>Hemoglobin subunit alpha-A</fullName>
    </recommendedName>
    <alternativeName>
        <fullName>Alpha-A-globin</fullName>
    </alternativeName>
    <alternativeName>
        <fullName>Hemoglobin alpha-A chain</fullName>
    </alternativeName>
</protein>
<gene>
    <name type="primary">hbaa</name>
</gene>
<reference key="1">
    <citation type="submission" date="1999-11" db="EMBL/GenBank/DDBJ databases">
        <title>Yellowtail's mRNA for hemoglobin alpha chain A.</title>
        <authorList>
            <person name="Sakai M."/>
            <person name="Okamoto K."/>
        </authorList>
    </citation>
    <scope>NUCLEOTIDE SEQUENCE [MRNA]</scope>
    <source>
        <tissue>Kidney</tissue>
    </source>
</reference>
<organism>
    <name type="scientific">Seriola quinqueradiata</name>
    <name type="common">Five-ray yellowtail</name>
    <dbReference type="NCBI Taxonomy" id="8161"/>
    <lineage>
        <taxon>Eukaryota</taxon>
        <taxon>Metazoa</taxon>
        <taxon>Chordata</taxon>
        <taxon>Craniata</taxon>
        <taxon>Vertebrata</taxon>
        <taxon>Euteleostomi</taxon>
        <taxon>Actinopterygii</taxon>
        <taxon>Neopterygii</taxon>
        <taxon>Teleostei</taxon>
        <taxon>Neoteleostei</taxon>
        <taxon>Acanthomorphata</taxon>
        <taxon>Carangaria</taxon>
        <taxon>Carangiformes</taxon>
        <taxon>Carangidae</taxon>
        <taxon>Seriola</taxon>
    </lineage>
</organism>